<name>SYM_MYCBO</name>
<organism>
    <name type="scientific">Mycobacterium bovis (strain ATCC BAA-935 / AF2122/97)</name>
    <dbReference type="NCBI Taxonomy" id="233413"/>
    <lineage>
        <taxon>Bacteria</taxon>
        <taxon>Bacillati</taxon>
        <taxon>Actinomycetota</taxon>
        <taxon>Actinomycetes</taxon>
        <taxon>Mycobacteriales</taxon>
        <taxon>Mycobacteriaceae</taxon>
        <taxon>Mycobacterium</taxon>
        <taxon>Mycobacterium tuberculosis complex</taxon>
    </lineage>
</organism>
<feature type="chain" id="PRO_0000139231" description="Methionine--tRNA ligase">
    <location>
        <begin position="1"/>
        <end position="519"/>
    </location>
</feature>
<feature type="region of interest" description="Disordered" evidence="2">
    <location>
        <begin position="500"/>
        <end position="519"/>
    </location>
</feature>
<feature type="short sequence motif" description="'HIGH' region">
    <location>
        <begin position="11"/>
        <end position="21"/>
    </location>
</feature>
<feature type="short sequence motif" description="'KMSKS' region">
    <location>
        <begin position="299"/>
        <end position="303"/>
    </location>
</feature>
<feature type="binding site" evidence="1">
    <location>
        <position position="302"/>
    </location>
    <ligand>
        <name>ATP</name>
        <dbReference type="ChEBI" id="CHEBI:30616"/>
    </ligand>
</feature>
<protein>
    <recommendedName>
        <fullName>Methionine--tRNA ligase</fullName>
        <ecNumber>6.1.1.10</ecNumber>
    </recommendedName>
    <alternativeName>
        <fullName>Methionyl-tRNA synthetase</fullName>
        <shortName>MetRS</shortName>
    </alternativeName>
</protein>
<evidence type="ECO:0000250" key="1"/>
<evidence type="ECO:0000256" key="2">
    <source>
        <dbReference type="SAM" id="MobiDB-lite"/>
    </source>
</evidence>
<evidence type="ECO:0000305" key="3"/>
<reference key="1">
    <citation type="journal article" date="2003" name="Proc. Natl. Acad. Sci. U.S.A.">
        <title>The complete genome sequence of Mycobacterium bovis.</title>
        <authorList>
            <person name="Garnier T."/>
            <person name="Eiglmeier K."/>
            <person name="Camus J.-C."/>
            <person name="Medina N."/>
            <person name="Mansoor H."/>
            <person name="Pryor M."/>
            <person name="Duthoy S."/>
            <person name="Grondin S."/>
            <person name="Lacroix C."/>
            <person name="Monsempe C."/>
            <person name="Simon S."/>
            <person name="Harris B."/>
            <person name="Atkin R."/>
            <person name="Doggett J."/>
            <person name="Mayes R."/>
            <person name="Keating L."/>
            <person name="Wheeler P.R."/>
            <person name="Parkhill J."/>
            <person name="Barrell B.G."/>
            <person name="Cole S.T."/>
            <person name="Gordon S.V."/>
            <person name="Hewinson R.G."/>
        </authorList>
    </citation>
    <scope>NUCLEOTIDE SEQUENCE [LARGE SCALE GENOMIC DNA]</scope>
    <source>
        <strain>ATCC BAA-935 / AF2122/97</strain>
    </source>
</reference>
<reference key="2">
    <citation type="journal article" date="2017" name="Genome Announc.">
        <title>Updated reference genome sequence and annotation of Mycobacterium bovis AF2122/97.</title>
        <authorList>
            <person name="Malone K.M."/>
            <person name="Farrell D."/>
            <person name="Stuber T.P."/>
            <person name="Schubert O.T."/>
            <person name="Aebersold R."/>
            <person name="Robbe-Austerman S."/>
            <person name="Gordon S.V."/>
        </authorList>
    </citation>
    <scope>NUCLEOTIDE SEQUENCE [LARGE SCALE GENOMIC DNA]</scope>
    <scope>GENOME REANNOTATION</scope>
    <source>
        <strain>ATCC BAA-935 / AF2122/97</strain>
    </source>
</reference>
<dbReference type="EC" id="6.1.1.10"/>
<dbReference type="EMBL" id="LT708304">
    <property type="protein sequence ID" value="SIT99634.1"/>
    <property type="molecule type" value="Genomic_DNA"/>
</dbReference>
<dbReference type="RefSeq" id="NP_854691.1">
    <property type="nucleotide sequence ID" value="NC_002945.3"/>
</dbReference>
<dbReference type="RefSeq" id="WP_003405183.1">
    <property type="nucleotide sequence ID" value="NC_002945.4"/>
</dbReference>
<dbReference type="SMR" id="P59952"/>
<dbReference type="GeneID" id="45424979"/>
<dbReference type="KEGG" id="mbo:BQ2027_MB1034C"/>
<dbReference type="PATRIC" id="fig|233413.5.peg.1126"/>
<dbReference type="Proteomes" id="UP000001419">
    <property type="component" value="Chromosome"/>
</dbReference>
<dbReference type="GO" id="GO:0005737">
    <property type="term" value="C:cytoplasm"/>
    <property type="evidence" value="ECO:0007669"/>
    <property type="project" value="UniProtKB-SubCell"/>
</dbReference>
<dbReference type="GO" id="GO:0005524">
    <property type="term" value="F:ATP binding"/>
    <property type="evidence" value="ECO:0007669"/>
    <property type="project" value="UniProtKB-UniRule"/>
</dbReference>
<dbReference type="GO" id="GO:0004825">
    <property type="term" value="F:methionine-tRNA ligase activity"/>
    <property type="evidence" value="ECO:0007669"/>
    <property type="project" value="UniProtKB-UniRule"/>
</dbReference>
<dbReference type="GO" id="GO:0006431">
    <property type="term" value="P:methionyl-tRNA aminoacylation"/>
    <property type="evidence" value="ECO:0007669"/>
    <property type="project" value="UniProtKB-UniRule"/>
</dbReference>
<dbReference type="CDD" id="cd07957">
    <property type="entry name" value="Anticodon_Ia_Met"/>
    <property type="match status" value="1"/>
</dbReference>
<dbReference type="CDD" id="cd00814">
    <property type="entry name" value="MetRS_core"/>
    <property type="match status" value="1"/>
</dbReference>
<dbReference type="FunFam" id="1.10.730.10:FF:000035">
    <property type="entry name" value="Methionine--tRNA ligase"/>
    <property type="match status" value="1"/>
</dbReference>
<dbReference type="FunFam" id="2.170.220.10:FF:000002">
    <property type="entry name" value="Methionine--tRNA ligase"/>
    <property type="match status" value="1"/>
</dbReference>
<dbReference type="Gene3D" id="2.170.220.10">
    <property type="match status" value="1"/>
</dbReference>
<dbReference type="Gene3D" id="3.40.50.620">
    <property type="entry name" value="HUPs"/>
    <property type="match status" value="1"/>
</dbReference>
<dbReference type="Gene3D" id="1.10.730.10">
    <property type="entry name" value="Isoleucyl-tRNA Synthetase, Domain 1"/>
    <property type="match status" value="1"/>
</dbReference>
<dbReference type="HAMAP" id="MF_01228">
    <property type="entry name" value="Met_tRNA_synth_type2"/>
    <property type="match status" value="1"/>
</dbReference>
<dbReference type="InterPro" id="IPR001412">
    <property type="entry name" value="aa-tRNA-synth_I_CS"/>
</dbReference>
<dbReference type="InterPro" id="IPR041872">
    <property type="entry name" value="Anticodon_Met"/>
</dbReference>
<dbReference type="InterPro" id="IPR014758">
    <property type="entry name" value="Met-tRNA_synth"/>
</dbReference>
<dbReference type="InterPro" id="IPR023457">
    <property type="entry name" value="Met-tRNA_synth_2"/>
</dbReference>
<dbReference type="InterPro" id="IPR015413">
    <property type="entry name" value="Methionyl/Leucyl_tRNA_Synth"/>
</dbReference>
<dbReference type="InterPro" id="IPR033911">
    <property type="entry name" value="MetRS_core"/>
</dbReference>
<dbReference type="InterPro" id="IPR014729">
    <property type="entry name" value="Rossmann-like_a/b/a_fold"/>
</dbReference>
<dbReference type="InterPro" id="IPR009080">
    <property type="entry name" value="tRNAsynth_Ia_anticodon-bd"/>
</dbReference>
<dbReference type="NCBIfam" id="TIGR00398">
    <property type="entry name" value="metG"/>
    <property type="match status" value="1"/>
</dbReference>
<dbReference type="NCBIfam" id="NF008900">
    <property type="entry name" value="PRK12267.1"/>
    <property type="match status" value="1"/>
</dbReference>
<dbReference type="PANTHER" id="PTHR43326:SF1">
    <property type="entry name" value="METHIONINE--TRNA LIGASE, MITOCHONDRIAL"/>
    <property type="match status" value="1"/>
</dbReference>
<dbReference type="PANTHER" id="PTHR43326">
    <property type="entry name" value="METHIONYL-TRNA SYNTHETASE"/>
    <property type="match status" value="1"/>
</dbReference>
<dbReference type="Pfam" id="PF19303">
    <property type="entry name" value="Anticodon_3"/>
    <property type="match status" value="1"/>
</dbReference>
<dbReference type="Pfam" id="PF09334">
    <property type="entry name" value="tRNA-synt_1g"/>
    <property type="match status" value="2"/>
</dbReference>
<dbReference type="PRINTS" id="PR01041">
    <property type="entry name" value="TRNASYNTHMET"/>
</dbReference>
<dbReference type="SUPFAM" id="SSF47323">
    <property type="entry name" value="Anticodon-binding domain of a subclass of class I aminoacyl-tRNA synthetases"/>
    <property type="match status" value="1"/>
</dbReference>
<dbReference type="SUPFAM" id="SSF52374">
    <property type="entry name" value="Nucleotidylyl transferase"/>
    <property type="match status" value="1"/>
</dbReference>
<dbReference type="PROSITE" id="PS00178">
    <property type="entry name" value="AA_TRNA_LIGASE_I"/>
    <property type="match status" value="1"/>
</dbReference>
<keyword id="KW-0030">Aminoacyl-tRNA synthetase</keyword>
<keyword id="KW-0067">ATP-binding</keyword>
<keyword id="KW-0963">Cytoplasm</keyword>
<keyword id="KW-0436">Ligase</keyword>
<keyword id="KW-0547">Nucleotide-binding</keyword>
<keyword id="KW-0648">Protein biosynthesis</keyword>
<keyword id="KW-1185">Reference proteome</keyword>
<comment type="function">
    <text evidence="1">Is required not only for elongation of protein synthesis but also for the initiation of all mRNA translation through initiator tRNA(fMet) aminoacylation.</text>
</comment>
<comment type="catalytic activity">
    <reaction>
        <text>tRNA(Met) + L-methionine + ATP = L-methionyl-tRNA(Met) + AMP + diphosphate</text>
        <dbReference type="Rhea" id="RHEA:13481"/>
        <dbReference type="Rhea" id="RHEA-COMP:9667"/>
        <dbReference type="Rhea" id="RHEA-COMP:9698"/>
        <dbReference type="ChEBI" id="CHEBI:30616"/>
        <dbReference type="ChEBI" id="CHEBI:33019"/>
        <dbReference type="ChEBI" id="CHEBI:57844"/>
        <dbReference type="ChEBI" id="CHEBI:78442"/>
        <dbReference type="ChEBI" id="CHEBI:78530"/>
        <dbReference type="ChEBI" id="CHEBI:456215"/>
        <dbReference type="EC" id="6.1.1.10"/>
    </reaction>
</comment>
<comment type="subunit">
    <text evidence="1">Monomer.</text>
</comment>
<comment type="subcellular location">
    <subcellularLocation>
        <location evidence="1">Cytoplasm</location>
    </subcellularLocation>
</comment>
<comment type="similarity">
    <text evidence="3">Belongs to the class-I aminoacyl-tRNA synthetase family. MetG type 2B subfamily.</text>
</comment>
<accession>P59952</accession>
<accession>A0A1R3XX45</accession>
<accession>X2BGZ0</accession>
<proteinExistence type="inferred from homology"/>
<sequence>MKPYYVTTAIAYPNAAPHVGHAYEYIATDAIARFKRLDGYDVRFLTGTDEHGLKVAQAAAAAGVPTAALARRNSDVFQRMQEALNISFDRFIRTTDADHHEASKELWRRMSAAGDIYLDNYSGWYSVRDERFFVESETQLVDGTRLTVETGTPVTWTEEQTYFFRLSAYTDKLLAHYHANPDFIAPETRRNEVISFVSGGLDDLSISRTSFDWGVQVPEHPDHVMYVWVDALTNYLTGAGFPDTDSELFRRYWPADLHMIGKDIIRFHAVYWPAFLMSAGIELPRRIFAHGFLHNRGEKMSKSVGNIVDPVALAEALGVDQVRYFLLREVPFGQDGSYSDEAIVTRINTDLANELGNLAQRSLSMVAKNLDGRVPNPGEFADADAALLATADGLLERVRGHFDAQAMHLALEAIWLMLGDANKYFSVQQPWVLRKSESEADQARFRTTLYVTCEVVRIAALLIQPVMPESAGKILDLLGQAPNQRSFAAVGVRLTPGTALPPPTGVFPRYQPPQPPEGK</sequence>
<gene>
    <name type="primary">metG</name>
    <name type="synonym">metS</name>
    <name type="ordered locus">BQ2027_MB1034C</name>
</gene>